<sequence>MPYRKYREKKYETKYREAFKLFQEKIGITFTDEKLLIQAFTHSSYVNEHRKKPHEDNERLEFLGDAVLELTVSQYLFQKYPTMSEGELTKLRAAIVCEPSLVRFANELSFGSLVLLGKGEEMTGGRERPALLADVFEAFIGALYLDQGLETVWGFLKEIVYPKINEGAFSHVMDYKSQLQELIQRDGSGNIEYQILQEKGPAHNREFVSRVTLNNVALGLGSGKSKKEAEQQAAAEALKKLKEQL</sequence>
<name>RNC_BACAC</name>
<feature type="chain" id="PRO_1000118911" description="Ribonuclease 3">
    <location>
        <begin position="1"/>
        <end position="245"/>
    </location>
</feature>
<feature type="domain" description="RNase III" evidence="1">
    <location>
        <begin position="19"/>
        <end position="148"/>
    </location>
</feature>
<feature type="domain" description="DRBM" evidence="1">
    <location>
        <begin position="174"/>
        <end position="243"/>
    </location>
</feature>
<feature type="active site" evidence="1">
    <location>
        <position position="65"/>
    </location>
</feature>
<feature type="active site" evidence="1">
    <location>
        <position position="137"/>
    </location>
</feature>
<feature type="binding site" evidence="1">
    <location>
        <position position="61"/>
    </location>
    <ligand>
        <name>Mg(2+)</name>
        <dbReference type="ChEBI" id="CHEBI:18420"/>
    </ligand>
</feature>
<feature type="binding site" evidence="1">
    <location>
        <position position="134"/>
    </location>
    <ligand>
        <name>Mg(2+)</name>
        <dbReference type="ChEBI" id="CHEBI:18420"/>
    </ligand>
</feature>
<feature type="binding site" evidence="1">
    <location>
        <position position="137"/>
    </location>
    <ligand>
        <name>Mg(2+)</name>
        <dbReference type="ChEBI" id="CHEBI:18420"/>
    </ligand>
</feature>
<comment type="function">
    <text evidence="1">Digests double-stranded RNA. Involved in the processing of primary rRNA transcript to yield the immediate precursors to the large and small rRNAs (23S and 16S). Processes some mRNAs, and tRNAs when they are encoded in the rRNA operon. Processes pre-crRNA and tracrRNA of type II CRISPR loci if present in the organism.</text>
</comment>
<comment type="catalytic activity">
    <reaction evidence="1">
        <text>Endonucleolytic cleavage to 5'-phosphomonoester.</text>
        <dbReference type="EC" id="3.1.26.3"/>
    </reaction>
</comment>
<comment type="cofactor">
    <cofactor evidence="1">
        <name>Mg(2+)</name>
        <dbReference type="ChEBI" id="CHEBI:18420"/>
    </cofactor>
</comment>
<comment type="subunit">
    <text evidence="1">Homodimer.</text>
</comment>
<comment type="subcellular location">
    <subcellularLocation>
        <location evidence="1">Cytoplasm</location>
    </subcellularLocation>
</comment>
<comment type="similarity">
    <text evidence="1">Belongs to the ribonuclease III family.</text>
</comment>
<organism>
    <name type="scientific">Bacillus anthracis (strain CDC 684 / NRRL 3495)</name>
    <dbReference type="NCBI Taxonomy" id="568206"/>
    <lineage>
        <taxon>Bacteria</taxon>
        <taxon>Bacillati</taxon>
        <taxon>Bacillota</taxon>
        <taxon>Bacilli</taxon>
        <taxon>Bacillales</taxon>
        <taxon>Bacillaceae</taxon>
        <taxon>Bacillus</taxon>
        <taxon>Bacillus cereus group</taxon>
    </lineage>
</organism>
<gene>
    <name evidence="1" type="primary">rnc</name>
    <name type="ordered locus">BAMEG_0644</name>
</gene>
<reference key="1">
    <citation type="submission" date="2008-10" db="EMBL/GenBank/DDBJ databases">
        <title>Genome sequence of Bacillus anthracis str. CDC 684.</title>
        <authorList>
            <person name="Dodson R.J."/>
            <person name="Munk A.C."/>
            <person name="Brettin T."/>
            <person name="Bruce D."/>
            <person name="Detter C."/>
            <person name="Tapia R."/>
            <person name="Han C."/>
            <person name="Sutton G."/>
            <person name="Sims D."/>
        </authorList>
    </citation>
    <scope>NUCLEOTIDE SEQUENCE [LARGE SCALE GENOMIC DNA]</scope>
    <source>
        <strain>CDC 684 / NRRL 3495</strain>
    </source>
</reference>
<accession>C3L778</accession>
<proteinExistence type="inferred from homology"/>
<evidence type="ECO:0000255" key="1">
    <source>
        <dbReference type="HAMAP-Rule" id="MF_00104"/>
    </source>
</evidence>
<protein>
    <recommendedName>
        <fullName evidence="1">Ribonuclease 3</fullName>
        <ecNumber evidence="1">3.1.26.3</ecNumber>
    </recommendedName>
    <alternativeName>
        <fullName evidence="1">Ribonuclease III</fullName>
        <shortName evidence="1">RNase III</shortName>
    </alternativeName>
</protein>
<dbReference type="EC" id="3.1.26.3" evidence="1"/>
<dbReference type="EMBL" id="CP001215">
    <property type="protein sequence ID" value="ACP15956.1"/>
    <property type="molecule type" value="Genomic_DNA"/>
</dbReference>
<dbReference type="SMR" id="C3L778"/>
<dbReference type="KEGG" id="bah:BAMEG_0644"/>
<dbReference type="HOGENOM" id="CLU_000907_1_3_9"/>
<dbReference type="GO" id="GO:0005737">
    <property type="term" value="C:cytoplasm"/>
    <property type="evidence" value="ECO:0007669"/>
    <property type="project" value="UniProtKB-SubCell"/>
</dbReference>
<dbReference type="GO" id="GO:0003725">
    <property type="term" value="F:double-stranded RNA binding"/>
    <property type="evidence" value="ECO:0007669"/>
    <property type="project" value="TreeGrafter"/>
</dbReference>
<dbReference type="GO" id="GO:0046872">
    <property type="term" value="F:metal ion binding"/>
    <property type="evidence" value="ECO:0007669"/>
    <property type="project" value="UniProtKB-KW"/>
</dbReference>
<dbReference type="GO" id="GO:0004525">
    <property type="term" value="F:ribonuclease III activity"/>
    <property type="evidence" value="ECO:0007669"/>
    <property type="project" value="UniProtKB-UniRule"/>
</dbReference>
<dbReference type="GO" id="GO:0019843">
    <property type="term" value="F:rRNA binding"/>
    <property type="evidence" value="ECO:0007669"/>
    <property type="project" value="UniProtKB-KW"/>
</dbReference>
<dbReference type="GO" id="GO:0006397">
    <property type="term" value="P:mRNA processing"/>
    <property type="evidence" value="ECO:0007669"/>
    <property type="project" value="UniProtKB-UniRule"/>
</dbReference>
<dbReference type="GO" id="GO:0010468">
    <property type="term" value="P:regulation of gene expression"/>
    <property type="evidence" value="ECO:0007669"/>
    <property type="project" value="TreeGrafter"/>
</dbReference>
<dbReference type="GO" id="GO:0006364">
    <property type="term" value="P:rRNA processing"/>
    <property type="evidence" value="ECO:0007669"/>
    <property type="project" value="UniProtKB-UniRule"/>
</dbReference>
<dbReference type="GO" id="GO:0008033">
    <property type="term" value="P:tRNA processing"/>
    <property type="evidence" value="ECO:0007669"/>
    <property type="project" value="UniProtKB-KW"/>
</dbReference>
<dbReference type="CDD" id="cd10845">
    <property type="entry name" value="DSRM_RNAse_III_family"/>
    <property type="match status" value="1"/>
</dbReference>
<dbReference type="CDD" id="cd00593">
    <property type="entry name" value="RIBOc"/>
    <property type="match status" value="1"/>
</dbReference>
<dbReference type="FunFam" id="1.10.1520.10:FF:000001">
    <property type="entry name" value="Ribonuclease 3"/>
    <property type="match status" value="1"/>
</dbReference>
<dbReference type="FunFam" id="3.30.160.20:FF:000003">
    <property type="entry name" value="Ribonuclease 3"/>
    <property type="match status" value="1"/>
</dbReference>
<dbReference type="Gene3D" id="3.30.160.20">
    <property type="match status" value="1"/>
</dbReference>
<dbReference type="Gene3D" id="1.10.1520.10">
    <property type="entry name" value="Ribonuclease III domain"/>
    <property type="match status" value="1"/>
</dbReference>
<dbReference type="HAMAP" id="MF_00104">
    <property type="entry name" value="RNase_III"/>
    <property type="match status" value="1"/>
</dbReference>
<dbReference type="InterPro" id="IPR014720">
    <property type="entry name" value="dsRBD_dom"/>
</dbReference>
<dbReference type="InterPro" id="IPR011907">
    <property type="entry name" value="RNase_III"/>
</dbReference>
<dbReference type="InterPro" id="IPR000999">
    <property type="entry name" value="RNase_III_dom"/>
</dbReference>
<dbReference type="InterPro" id="IPR036389">
    <property type="entry name" value="RNase_III_sf"/>
</dbReference>
<dbReference type="NCBIfam" id="TIGR02191">
    <property type="entry name" value="RNaseIII"/>
    <property type="match status" value="1"/>
</dbReference>
<dbReference type="PANTHER" id="PTHR11207:SF0">
    <property type="entry name" value="RIBONUCLEASE 3"/>
    <property type="match status" value="1"/>
</dbReference>
<dbReference type="PANTHER" id="PTHR11207">
    <property type="entry name" value="RIBONUCLEASE III"/>
    <property type="match status" value="1"/>
</dbReference>
<dbReference type="Pfam" id="PF00035">
    <property type="entry name" value="dsrm"/>
    <property type="match status" value="1"/>
</dbReference>
<dbReference type="Pfam" id="PF14622">
    <property type="entry name" value="Ribonucleas_3_3"/>
    <property type="match status" value="1"/>
</dbReference>
<dbReference type="SMART" id="SM00358">
    <property type="entry name" value="DSRM"/>
    <property type="match status" value="1"/>
</dbReference>
<dbReference type="SMART" id="SM00535">
    <property type="entry name" value="RIBOc"/>
    <property type="match status" value="1"/>
</dbReference>
<dbReference type="SUPFAM" id="SSF54768">
    <property type="entry name" value="dsRNA-binding domain-like"/>
    <property type="match status" value="1"/>
</dbReference>
<dbReference type="SUPFAM" id="SSF69065">
    <property type="entry name" value="RNase III domain-like"/>
    <property type="match status" value="1"/>
</dbReference>
<dbReference type="PROSITE" id="PS50137">
    <property type="entry name" value="DS_RBD"/>
    <property type="match status" value="1"/>
</dbReference>
<dbReference type="PROSITE" id="PS00517">
    <property type="entry name" value="RNASE_3_1"/>
    <property type="match status" value="1"/>
</dbReference>
<dbReference type="PROSITE" id="PS50142">
    <property type="entry name" value="RNASE_3_2"/>
    <property type="match status" value="1"/>
</dbReference>
<keyword id="KW-0963">Cytoplasm</keyword>
<keyword id="KW-0255">Endonuclease</keyword>
<keyword id="KW-0378">Hydrolase</keyword>
<keyword id="KW-0460">Magnesium</keyword>
<keyword id="KW-0479">Metal-binding</keyword>
<keyword id="KW-0507">mRNA processing</keyword>
<keyword id="KW-0540">Nuclease</keyword>
<keyword id="KW-0694">RNA-binding</keyword>
<keyword id="KW-0698">rRNA processing</keyword>
<keyword id="KW-0699">rRNA-binding</keyword>
<keyword id="KW-0819">tRNA processing</keyword>